<accession>Q6GAA2</accession>
<proteinExistence type="inferred from homology"/>
<dbReference type="EMBL" id="BX571857">
    <property type="protein sequence ID" value="CAG42821.1"/>
    <property type="molecule type" value="Genomic_DNA"/>
</dbReference>
<dbReference type="RefSeq" id="WP_001118417.1">
    <property type="nucleotide sequence ID" value="NC_002953.3"/>
</dbReference>
<dbReference type="SMR" id="Q6GAA2"/>
<dbReference type="KEGG" id="sas:SAS1047"/>
<dbReference type="HOGENOM" id="CLU_160493_1_0_9"/>
<dbReference type="Gene3D" id="1.10.287.750">
    <property type="entry name" value="SO2669-like"/>
    <property type="match status" value="1"/>
</dbReference>
<dbReference type="HAMAP" id="MF_01560">
    <property type="entry name" value="UPF0358"/>
    <property type="match status" value="1"/>
</dbReference>
<dbReference type="InterPro" id="IPR009983">
    <property type="entry name" value="UPF0358"/>
</dbReference>
<dbReference type="InterPro" id="IPR036270">
    <property type="entry name" value="UPF0358_sf"/>
</dbReference>
<dbReference type="NCBIfam" id="NF010187">
    <property type="entry name" value="PRK13666.1"/>
    <property type="match status" value="1"/>
</dbReference>
<dbReference type="Pfam" id="PF07408">
    <property type="entry name" value="DUF1507"/>
    <property type="match status" value="1"/>
</dbReference>
<dbReference type="SUPFAM" id="SSF140404">
    <property type="entry name" value="EF2458-like"/>
    <property type="match status" value="1"/>
</dbReference>
<protein>
    <recommendedName>
        <fullName evidence="1">UPF0358 protein SAS1047</fullName>
    </recommendedName>
</protein>
<gene>
    <name type="ordered locus">SAS1047</name>
</gene>
<comment type="similarity">
    <text evidence="1">Belongs to the UPF0358 family.</text>
</comment>
<reference key="1">
    <citation type="journal article" date="2004" name="Proc. Natl. Acad. Sci. U.S.A.">
        <title>Complete genomes of two clinical Staphylococcus aureus strains: evidence for the rapid evolution of virulence and drug resistance.</title>
        <authorList>
            <person name="Holden M.T.G."/>
            <person name="Feil E.J."/>
            <person name="Lindsay J.A."/>
            <person name="Peacock S.J."/>
            <person name="Day N.P.J."/>
            <person name="Enright M.C."/>
            <person name="Foster T.J."/>
            <person name="Moore C.E."/>
            <person name="Hurst L."/>
            <person name="Atkin R."/>
            <person name="Barron A."/>
            <person name="Bason N."/>
            <person name="Bentley S.D."/>
            <person name="Chillingworth C."/>
            <person name="Chillingworth T."/>
            <person name="Churcher C."/>
            <person name="Clark L."/>
            <person name="Corton C."/>
            <person name="Cronin A."/>
            <person name="Doggett J."/>
            <person name="Dowd L."/>
            <person name="Feltwell T."/>
            <person name="Hance Z."/>
            <person name="Harris B."/>
            <person name="Hauser H."/>
            <person name="Holroyd S."/>
            <person name="Jagels K."/>
            <person name="James K.D."/>
            <person name="Lennard N."/>
            <person name="Line A."/>
            <person name="Mayes R."/>
            <person name="Moule S."/>
            <person name="Mungall K."/>
            <person name="Ormond D."/>
            <person name="Quail M.A."/>
            <person name="Rabbinowitsch E."/>
            <person name="Rutherford K.M."/>
            <person name="Sanders M."/>
            <person name="Sharp S."/>
            <person name="Simmonds M."/>
            <person name="Stevens K."/>
            <person name="Whitehead S."/>
            <person name="Barrell B.G."/>
            <person name="Spratt B.G."/>
            <person name="Parkhill J."/>
        </authorList>
    </citation>
    <scope>NUCLEOTIDE SEQUENCE [LARGE SCALE GENOMIC DNA]</scope>
    <source>
        <strain>MSSA476</strain>
    </source>
</reference>
<evidence type="ECO:0000255" key="1">
    <source>
        <dbReference type="HAMAP-Rule" id="MF_01560"/>
    </source>
</evidence>
<name>Y1047_STAAS</name>
<sequence>MAKQATMKNAALKQLTKDADEILHLIKVQLDNLTLPSCPLYEEVLDTQMFGLQKEVDFAVKLGLVDREDGKQIMLRLEKELSKLHEAFTLV</sequence>
<organism>
    <name type="scientific">Staphylococcus aureus (strain MSSA476)</name>
    <dbReference type="NCBI Taxonomy" id="282459"/>
    <lineage>
        <taxon>Bacteria</taxon>
        <taxon>Bacillati</taxon>
        <taxon>Bacillota</taxon>
        <taxon>Bacilli</taxon>
        <taxon>Bacillales</taxon>
        <taxon>Staphylococcaceae</taxon>
        <taxon>Staphylococcus</taxon>
    </lineage>
</organism>
<feature type="chain" id="PRO_0000110653" description="UPF0358 protein SAS1047">
    <location>
        <begin position="1"/>
        <end position="91"/>
    </location>
</feature>